<accession>A0LMC1</accession>
<name>PHNX_SYNFM</name>
<organism>
    <name type="scientific">Syntrophobacter fumaroxidans (strain DSM 10017 / MPOB)</name>
    <dbReference type="NCBI Taxonomy" id="335543"/>
    <lineage>
        <taxon>Bacteria</taxon>
        <taxon>Pseudomonadati</taxon>
        <taxon>Thermodesulfobacteriota</taxon>
        <taxon>Syntrophobacteria</taxon>
        <taxon>Syntrophobacterales</taxon>
        <taxon>Syntrophobacteraceae</taxon>
        <taxon>Syntrophobacter</taxon>
    </lineage>
</organism>
<dbReference type="EC" id="3.11.1.1" evidence="1"/>
<dbReference type="EMBL" id="CP000478">
    <property type="protein sequence ID" value="ABK18573.1"/>
    <property type="molecule type" value="Genomic_DNA"/>
</dbReference>
<dbReference type="RefSeq" id="WP_011699738.1">
    <property type="nucleotide sequence ID" value="NC_008554.1"/>
</dbReference>
<dbReference type="SMR" id="A0LMC1"/>
<dbReference type="STRING" id="335543.Sfum_2896"/>
<dbReference type="KEGG" id="sfu:Sfum_2896"/>
<dbReference type="eggNOG" id="COG0637">
    <property type="taxonomic scope" value="Bacteria"/>
</dbReference>
<dbReference type="HOGENOM" id="CLU_045011_12_0_7"/>
<dbReference type="InParanoid" id="A0LMC1"/>
<dbReference type="OrthoDB" id="5504491at2"/>
<dbReference type="Proteomes" id="UP000001784">
    <property type="component" value="Chromosome"/>
</dbReference>
<dbReference type="GO" id="GO:0005829">
    <property type="term" value="C:cytosol"/>
    <property type="evidence" value="ECO:0007669"/>
    <property type="project" value="TreeGrafter"/>
</dbReference>
<dbReference type="GO" id="GO:0046872">
    <property type="term" value="F:metal ion binding"/>
    <property type="evidence" value="ECO:0007669"/>
    <property type="project" value="UniProtKB-KW"/>
</dbReference>
<dbReference type="GO" id="GO:0008967">
    <property type="term" value="F:phosphoglycolate phosphatase activity"/>
    <property type="evidence" value="ECO:0007669"/>
    <property type="project" value="TreeGrafter"/>
</dbReference>
<dbReference type="GO" id="GO:0050194">
    <property type="term" value="F:phosphonoacetaldehyde hydrolase activity"/>
    <property type="evidence" value="ECO:0007669"/>
    <property type="project" value="UniProtKB-EC"/>
</dbReference>
<dbReference type="GO" id="GO:0006281">
    <property type="term" value="P:DNA repair"/>
    <property type="evidence" value="ECO:0007669"/>
    <property type="project" value="TreeGrafter"/>
</dbReference>
<dbReference type="GO" id="GO:0019700">
    <property type="term" value="P:organic phosphonate catabolic process"/>
    <property type="evidence" value="ECO:0007669"/>
    <property type="project" value="InterPro"/>
</dbReference>
<dbReference type="CDD" id="cd02586">
    <property type="entry name" value="HAD_PHN"/>
    <property type="match status" value="1"/>
</dbReference>
<dbReference type="FunFam" id="1.10.150.240:FF:000006">
    <property type="entry name" value="Phosphonoacetaldehyde hydrolase"/>
    <property type="match status" value="1"/>
</dbReference>
<dbReference type="Gene3D" id="3.40.50.1000">
    <property type="entry name" value="HAD superfamily/HAD-like"/>
    <property type="match status" value="1"/>
</dbReference>
<dbReference type="Gene3D" id="1.10.150.240">
    <property type="entry name" value="Putative phosphatase, domain 2"/>
    <property type="match status" value="1"/>
</dbReference>
<dbReference type="HAMAP" id="MF_01375">
    <property type="entry name" value="PhnX"/>
    <property type="match status" value="1"/>
</dbReference>
<dbReference type="InterPro" id="IPR050155">
    <property type="entry name" value="HAD-like_hydrolase_sf"/>
</dbReference>
<dbReference type="InterPro" id="IPR036412">
    <property type="entry name" value="HAD-like_sf"/>
</dbReference>
<dbReference type="InterPro" id="IPR023214">
    <property type="entry name" value="HAD_sf"/>
</dbReference>
<dbReference type="InterPro" id="IPR023198">
    <property type="entry name" value="PGP-like_dom2"/>
</dbReference>
<dbReference type="InterPro" id="IPR006323">
    <property type="entry name" value="Phosphonoacetald_hydro"/>
</dbReference>
<dbReference type="NCBIfam" id="TIGR01422">
    <property type="entry name" value="phosphonatase"/>
    <property type="match status" value="1"/>
</dbReference>
<dbReference type="PANTHER" id="PTHR43434">
    <property type="entry name" value="PHOSPHOGLYCOLATE PHOSPHATASE"/>
    <property type="match status" value="1"/>
</dbReference>
<dbReference type="PANTHER" id="PTHR43434:SF19">
    <property type="entry name" value="PHOSPHONOACETALDEHYDE HYDROLASE"/>
    <property type="match status" value="1"/>
</dbReference>
<dbReference type="Pfam" id="PF00702">
    <property type="entry name" value="Hydrolase"/>
    <property type="match status" value="1"/>
</dbReference>
<dbReference type="SFLD" id="SFLDG01129">
    <property type="entry name" value="C1.5:_HAD__Beta-PGM__Phosphata"/>
    <property type="match status" value="1"/>
</dbReference>
<dbReference type="SFLD" id="SFLDS00003">
    <property type="entry name" value="Haloacid_Dehalogenase"/>
    <property type="match status" value="1"/>
</dbReference>
<dbReference type="SUPFAM" id="SSF56784">
    <property type="entry name" value="HAD-like"/>
    <property type="match status" value="1"/>
</dbReference>
<comment type="function">
    <text evidence="1">Involved in phosphonate degradation.</text>
</comment>
<comment type="catalytic activity">
    <reaction evidence="1">
        <text>phosphonoacetaldehyde + H2O = acetaldehyde + phosphate + H(+)</text>
        <dbReference type="Rhea" id="RHEA:18905"/>
        <dbReference type="ChEBI" id="CHEBI:15343"/>
        <dbReference type="ChEBI" id="CHEBI:15377"/>
        <dbReference type="ChEBI" id="CHEBI:15378"/>
        <dbReference type="ChEBI" id="CHEBI:43474"/>
        <dbReference type="ChEBI" id="CHEBI:58383"/>
        <dbReference type="EC" id="3.11.1.1"/>
    </reaction>
</comment>
<comment type="cofactor">
    <cofactor evidence="1">
        <name>Mg(2+)</name>
        <dbReference type="ChEBI" id="CHEBI:18420"/>
    </cofactor>
    <text evidence="1">Binds 1 Mg(2+) ion per subunit.</text>
</comment>
<comment type="subunit">
    <text evidence="1">Homodimer.</text>
</comment>
<comment type="similarity">
    <text evidence="1">Belongs to the HAD-like hydrolase superfamily. PhnX family.</text>
</comment>
<reference key="1">
    <citation type="submission" date="2006-10" db="EMBL/GenBank/DDBJ databases">
        <title>Complete sequence of Syntrophobacter fumaroxidans MPOB.</title>
        <authorList>
            <consortium name="US DOE Joint Genome Institute"/>
            <person name="Copeland A."/>
            <person name="Lucas S."/>
            <person name="Lapidus A."/>
            <person name="Barry K."/>
            <person name="Detter J.C."/>
            <person name="Glavina del Rio T."/>
            <person name="Hammon N."/>
            <person name="Israni S."/>
            <person name="Pitluck S."/>
            <person name="Goltsman E.G."/>
            <person name="Martinez M."/>
            <person name="Schmutz J."/>
            <person name="Larimer F."/>
            <person name="Land M."/>
            <person name="Hauser L."/>
            <person name="Kyrpides N."/>
            <person name="Kim E."/>
            <person name="Boone D.R."/>
            <person name="Brockman F."/>
            <person name="Culley D."/>
            <person name="Ferry J."/>
            <person name="Gunsalus R."/>
            <person name="McInerney M.J."/>
            <person name="Morrison M."/>
            <person name="Plugge C."/>
            <person name="Rohlin L."/>
            <person name="Scholten J."/>
            <person name="Sieber J."/>
            <person name="Stams A.J.M."/>
            <person name="Worm P."/>
            <person name="Henstra A.M."/>
            <person name="Richardson P."/>
        </authorList>
    </citation>
    <scope>NUCLEOTIDE SEQUENCE [LARGE SCALE GENOMIC DNA]</scope>
    <source>
        <strain>DSM 10017 / MPOB</strain>
    </source>
</reference>
<feature type="chain" id="PRO_0000284602" description="Phosphonoacetaldehyde hydrolase">
    <location>
        <begin position="1"/>
        <end position="277"/>
    </location>
</feature>
<feature type="active site" description="Nucleophile" evidence="1">
    <location>
        <position position="20"/>
    </location>
</feature>
<feature type="active site" description="Schiff-base intermediate with substrate" evidence="1">
    <location>
        <position position="61"/>
    </location>
</feature>
<feature type="binding site" evidence="1">
    <location>
        <position position="20"/>
    </location>
    <ligand>
        <name>Mg(2+)</name>
        <dbReference type="ChEBI" id="CHEBI:18420"/>
    </ligand>
</feature>
<feature type="binding site" evidence="1">
    <location>
        <position position="22"/>
    </location>
    <ligand>
        <name>Mg(2+)</name>
        <dbReference type="ChEBI" id="CHEBI:18420"/>
    </ligand>
</feature>
<feature type="binding site" evidence="1">
    <location>
        <position position="194"/>
    </location>
    <ligand>
        <name>Mg(2+)</name>
        <dbReference type="ChEBI" id="CHEBI:18420"/>
    </ligand>
</feature>
<keyword id="KW-0378">Hydrolase</keyword>
<keyword id="KW-0460">Magnesium</keyword>
<keyword id="KW-0479">Metal-binding</keyword>
<keyword id="KW-1185">Reference proteome</keyword>
<keyword id="KW-0704">Schiff base</keyword>
<evidence type="ECO:0000255" key="1">
    <source>
        <dbReference type="HAMAP-Rule" id="MF_01375"/>
    </source>
</evidence>
<sequence>MEIFVRNKPYTGPVKAVVLDWAGTTVDFGCMAPVTAFIEAFALRGVEISASEVRGPMGLMKMDHVRALCGLPSVSERWRELFGRIPNEDDVRLVYGDTVPLMVLSVADHAELIPGLLPAIGYFRGNGIKIGTSTGYTTPMMEVLLPRAEKRGYRPDSVVCSSDVPRGRPFPFMCYRNAIDLEVYPLEAVVKIGDTVSDIREGLNAGMWTIGVSKSGSDLGLTEAELDALPADDLRNRLALVESRFLEAGAHFVVEHIGRCPEIIEEINDLLSQGEVP</sequence>
<proteinExistence type="inferred from homology"/>
<gene>
    <name evidence="1" type="primary">phnX</name>
    <name type="ordered locus">Sfum_2896</name>
</gene>
<protein>
    <recommendedName>
        <fullName evidence="1">Phosphonoacetaldehyde hydrolase</fullName>
        <shortName evidence="1">Phosphonatase</shortName>
        <ecNumber evidence="1">3.11.1.1</ecNumber>
    </recommendedName>
    <alternativeName>
        <fullName evidence="1">Phosphonoacetaldehyde phosphonohydrolase</fullName>
    </alternativeName>
</protein>